<dbReference type="EC" id="3.1.-.-" evidence="1"/>
<dbReference type="EMBL" id="AF170574">
    <property type="protein sequence ID" value="AAF89737.2"/>
    <property type="molecule type" value="Genomic_RNA"/>
</dbReference>
<dbReference type="PDB" id="5D98">
    <property type="method" value="X-ray"/>
    <property type="resolution" value="3.90 A"/>
    <property type="chains" value="A/D=1-709"/>
</dbReference>
<dbReference type="PDB" id="5D9A">
    <property type="method" value="X-ray"/>
    <property type="resolution" value="4.30 A"/>
    <property type="chains" value="A/D/G/J=1-709"/>
</dbReference>
<dbReference type="PDB" id="6F5P">
    <property type="method" value="X-ray"/>
    <property type="resolution" value="4.14 A"/>
    <property type="chains" value="A/D=1-709"/>
</dbReference>
<dbReference type="PDB" id="6XZD">
    <property type="method" value="EM"/>
    <property type="resolution" value="3.40 A"/>
    <property type="chains" value="AP1/DP1=1-709"/>
</dbReference>
<dbReference type="PDB" id="6XZG">
    <property type="method" value="EM"/>
    <property type="resolution" value="3.80 A"/>
    <property type="chains" value="AP1/DP1=1-709"/>
</dbReference>
<dbReference type="PDB" id="6XZP">
    <property type="method" value="EM"/>
    <property type="resolution" value="3.30 A"/>
    <property type="chains" value="AP1/DP1=1-709"/>
</dbReference>
<dbReference type="PDB" id="6XZQ">
    <property type="method" value="EM"/>
    <property type="resolution" value="3.60 A"/>
    <property type="chains" value="A/D=1-709"/>
</dbReference>
<dbReference type="PDB" id="6XZR">
    <property type="method" value="EM"/>
    <property type="resolution" value="3.30 A"/>
    <property type="chains" value="AP1/DP1=1-709"/>
</dbReference>
<dbReference type="PDB" id="6Y0C">
    <property type="method" value="EM"/>
    <property type="resolution" value="3.20 A"/>
    <property type="chains" value="A=1-709"/>
</dbReference>
<dbReference type="PDBsum" id="5D98"/>
<dbReference type="PDBsum" id="5D9A"/>
<dbReference type="PDBsum" id="6F5P"/>
<dbReference type="PDBsum" id="6XZD"/>
<dbReference type="PDBsum" id="6XZG"/>
<dbReference type="PDBsum" id="6XZP"/>
<dbReference type="PDBsum" id="6XZQ"/>
<dbReference type="PDBsum" id="6XZR"/>
<dbReference type="PDBsum" id="6Y0C"/>
<dbReference type="EMDB" id="EMD-10659"/>
<dbReference type="EMDB" id="EMD-10662"/>
<dbReference type="EMDB" id="EMD-10664"/>
<dbReference type="EMDB" id="EMD-10665"/>
<dbReference type="EMDB" id="EMD-10666"/>
<dbReference type="EMDB" id="EMD-10667"/>
<dbReference type="SMR" id="Q9IMP5"/>
<dbReference type="DIP" id="DIP-61786N"/>
<dbReference type="IntAct" id="Q9IMP5">
    <property type="interactions" value="2"/>
</dbReference>
<dbReference type="EvolutionaryTrace" id="Q9IMP5"/>
<dbReference type="Proteomes" id="UP000138885">
    <property type="component" value="Genome"/>
</dbReference>
<dbReference type="GO" id="GO:0030430">
    <property type="term" value="C:host cell cytoplasm"/>
    <property type="evidence" value="ECO:0007669"/>
    <property type="project" value="UniProtKB-SubCell"/>
</dbReference>
<dbReference type="GO" id="GO:0042025">
    <property type="term" value="C:host cell nucleus"/>
    <property type="evidence" value="ECO:0007669"/>
    <property type="project" value="UniProtKB-SubCell"/>
</dbReference>
<dbReference type="GO" id="GO:0004519">
    <property type="term" value="F:endonuclease activity"/>
    <property type="evidence" value="ECO:0007669"/>
    <property type="project" value="UniProtKB-KW"/>
</dbReference>
<dbReference type="GO" id="GO:0046872">
    <property type="term" value="F:metal ion binding"/>
    <property type="evidence" value="ECO:0007669"/>
    <property type="project" value="UniProtKB-KW"/>
</dbReference>
<dbReference type="GO" id="GO:0003723">
    <property type="term" value="F:RNA binding"/>
    <property type="evidence" value="ECO:0007669"/>
    <property type="project" value="UniProtKB-UniRule"/>
</dbReference>
<dbReference type="GO" id="GO:0075526">
    <property type="term" value="P:cap snatching"/>
    <property type="evidence" value="ECO:0007669"/>
    <property type="project" value="UniProtKB-UniRule"/>
</dbReference>
<dbReference type="GO" id="GO:0006351">
    <property type="term" value="P:DNA-templated transcription"/>
    <property type="evidence" value="ECO:0007669"/>
    <property type="project" value="UniProtKB-UniRule"/>
</dbReference>
<dbReference type="GO" id="GO:0039657">
    <property type="term" value="P:symbiont-mediated suppression of host gene expression"/>
    <property type="evidence" value="ECO:0007669"/>
    <property type="project" value="UniProtKB-KW"/>
</dbReference>
<dbReference type="GO" id="GO:0039523">
    <property type="term" value="P:symbiont-mediated suppression of host mRNA transcription via inhibition of RNA polymerase II activity"/>
    <property type="evidence" value="ECO:0007669"/>
    <property type="project" value="UniProtKB-UniRule"/>
</dbReference>
<dbReference type="GO" id="GO:0039694">
    <property type="term" value="P:viral RNA genome replication"/>
    <property type="evidence" value="ECO:0007669"/>
    <property type="project" value="InterPro"/>
</dbReference>
<dbReference type="GO" id="GO:0075523">
    <property type="term" value="P:viral translational frameshifting"/>
    <property type="evidence" value="ECO:0007669"/>
    <property type="project" value="UniProtKB-KW"/>
</dbReference>
<dbReference type="Gene3D" id="3.40.91.90">
    <property type="entry name" value="Influenza RNA-dependent RNA polymerase subunit PA, endonuclease domain"/>
    <property type="match status" value="1"/>
</dbReference>
<dbReference type="HAMAP" id="MF_04063">
    <property type="entry name" value="INFV_PA"/>
    <property type="match status" value="1"/>
</dbReference>
<dbReference type="InterPro" id="IPR037534">
    <property type="entry name" value="INFV_PA"/>
</dbReference>
<dbReference type="InterPro" id="IPR001009">
    <property type="entry name" value="PA/PA-X"/>
</dbReference>
<dbReference type="InterPro" id="IPR038372">
    <property type="entry name" value="PA/PA-X_sf"/>
</dbReference>
<dbReference type="Pfam" id="PF00603">
    <property type="entry name" value="Flu_PA"/>
    <property type="match status" value="1"/>
</dbReference>
<evidence type="ECO:0000255" key="1">
    <source>
        <dbReference type="HAMAP-Rule" id="MF_04063"/>
    </source>
</evidence>
<reference key="1">
    <citation type="submission" date="2006-10" db="EMBL/GenBank/DDBJ databases">
        <authorList>
            <person name="Crescenzo-Chaigne B."/>
        </authorList>
    </citation>
    <scope>NUCLEOTIDE SEQUENCE [GENOMIC RNA]</scope>
    <scope>SEQUENCE REVISION TO 11</scope>
</reference>
<reference key="2">
    <citation type="journal article" date="1999" name="Virology">
        <title>Comparative analysis of the ability of the polymerase complexes of influenza viruses type A, B and C to assemble into functional RNPs that allow expression and replication of heterotypic model RNA templates in vivo.</title>
        <authorList>
            <person name="Crescenzo-Chaigne B."/>
            <person name="Naffakh N."/>
            <person name="van der Werf S."/>
        </authorList>
    </citation>
    <scope>NUCLEOTIDE SEQUENCE [GENOMIC RNA] OF 2-709</scope>
</reference>
<sequence>MSKTFAEIAEAFLEPEAVRIAKEAVEEYGDHERKIIQIGIHFQVCCMFCDEYLSTNGSDRFVLIEGRKRGTAVSLQNELCKSYDLEPLPFLCDIFDREEKQFVEIGITRKADDSYFQSKFGKLGNSCKIFVFSYDGRLDKNCEGPMEEQKLRIFSFLATAADFLRKENMFNEIFLPDNEETIIEMKKGKTFLELRDESVPLPFQTYEQMKDYCEKFKGNPRELASKVSQMQSNIKLPIKHYEQNKFRQIRLPKGPMAPYTHKFLMEEAWMFTKISDPERSRAGEILIDFFKKGNLSAIRPKDKPLQGKYPIHYKNLWNQIKAAIADRTMVINENDHSEFLGGIGRASKKIPEISLTQDVITTEGLKQSENKLPEPRSFPRWFNAEWMWAIKDSDLTGWVPMAEYPPADNELEDYAEHLNKTMEGVLQGTNCAREMGKCILTVGALMTECRLFPGKIKVVPIYARSKERKSMQEGLPVPSEMDCLFGICVKSKSHLNKDDGMYTIITFEFSIREPNLEKHQKYTVFEAGHTTVRMKKGESVIGREVPLYLYCRTTALSKIKNDWLSKARRCFITTMDTVETICLRESAKAEENLVEKTLNEKQMWIGKKNGELIAQPLREALRVQLVQQFYFCIYNDSQLEGFCNEQKKILMALEGDKKNKSSFGFNPEGLLEKIEECLINNPMCLFMAQRLNELVIEASKRGAKFFKTD</sequence>
<protein>
    <recommendedName>
        <fullName evidence="1">Polymerase acidic protein</fullName>
        <ecNumber evidence="1">3.1.-.-</ecNumber>
    </recommendedName>
    <alternativeName>
        <fullName evidence="1">RNA-directed RNA polymerase subunit P2</fullName>
    </alternativeName>
</protein>
<gene>
    <name evidence="1" type="primary">PA</name>
    <name type="synonym">P3</name>
</gene>
<organismHost>
    <name type="scientific">Homo sapiens</name>
    <name type="common">Human</name>
    <dbReference type="NCBI Taxonomy" id="9606"/>
</organismHost>
<organismHost>
    <name type="scientific">Sus scrofa</name>
    <name type="common">Pig</name>
    <dbReference type="NCBI Taxonomy" id="9823"/>
</organismHost>
<feature type="chain" id="PRO_0000269901" description="Polymerase acidic protein">
    <location>
        <begin position="1"/>
        <end position="709"/>
    </location>
</feature>
<feature type="short sequence motif" description="Nuclear localization signal 1 (NLS1)" evidence="1">
    <location>
        <begin position="109"/>
        <end position="124"/>
    </location>
</feature>
<feature type="short sequence motif" description="Nuclear localization signal 2 (NLS2)" evidence="1">
    <location>
        <begin position="166"/>
        <end position="228"/>
    </location>
</feature>
<feature type="binding site" evidence="1">
    <location>
        <position position="41"/>
    </location>
    <ligand>
        <name>Mn(2+)</name>
        <dbReference type="ChEBI" id="CHEBI:29035"/>
        <label>1</label>
    </ligand>
</feature>
<feature type="binding site" evidence="1">
    <location>
        <position position="65"/>
    </location>
    <ligand>
        <name>Mn(2+)</name>
        <dbReference type="ChEBI" id="CHEBI:29035"/>
        <label>2</label>
    </ligand>
</feature>
<feature type="binding site" evidence="1">
    <location>
        <position position="93"/>
    </location>
    <ligand>
        <name>Mn(2+)</name>
        <dbReference type="ChEBI" id="CHEBI:29035"/>
        <label>1</label>
    </ligand>
</feature>
<feature type="binding site" evidence="1">
    <location>
        <position position="93"/>
    </location>
    <ligand>
        <name>Mn(2+)</name>
        <dbReference type="ChEBI" id="CHEBI:29035"/>
        <label>2</label>
    </ligand>
</feature>
<feature type="binding site" evidence="1">
    <location>
        <position position="104"/>
    </location>
    <ligand>
        <name>Mn(2+)</name>
        <dbReference type="ChEBI" id="CHEBI:29035"/>
        <label>1</label>
    </ligand>
</feature>
<feature type="binding site" evidence="1">
    <location>
        <position position="105"/>
    </location>
    <ligand>
        <name>Mn(2+)</name>
        <dbReference type="ChEBI" id="CHEBI:29035"/>
        <label>1</label>
    </ligand>
</feature>
<organism>
    <name type="scientific">Influenza C virus (strain C/Johannesburg/1/1966)</name>
    <dbReference type="NCBI Taxonomy" id="100673"/>
    <lineage>
        <taxon>Viruses</taxon>
        <taxon>Riboviria</taxon>
        <taxon>Orthornavirae</taxon>
        <taxon>Negarnaviricota</taxon>
        <taxon>Polyploviricotina</taxon>
        <taxon>Insthoviricetes</taxon>
        <taxon>Articulavirales</taxon>
        <taxon>Orthomyxoviridae</taxon>
        <taxon>Gammainfluenzavirus</taxon>
        <taxon>Gammainfluenzavirus influenzae</taxon>
        <taxon>Influenza C virus</taxon>
    </lineage>
</organism>
<accession>Q9IMP5</accession>
<keyword id="KW-0002">3D-structure</keyword>
<keyword id="KW-1157">Cap snatching</keyword>
<keyword id="KW-0255">Endonuclease</keyword>
<keyword id="KW-1262">Eukaryotic host gene expression shutoff by virus</keyword>
<keyword id="KW-1191">Eukaryotic host transcription shutoff by virus</keyword>
<keyword id="KW-1035">Host cytoplasm</keyword>
<keyword id="KW-1190">Host gene expression shutoff by virus</keyword>
<keyword id="KW-1048">Host nucleus</keyword>
<keyword id="KW-0945">Host-virus interaction</keyword>
<keyword id="KW-0378">Hydrolase</keyword>
<keyword id="KW-1104">Inhibition of host RNA polymerase II by virus</keyword>
<keyword id="KW-0464">Manganese</keyword>
<keyword id="KW-0479">Metal-binding</keyword>
<keyword id="KW-0540">Nuclease</keyword>
<keyword id="KW-0597">Phosphoprotein</keyword>
<keyword id="KW-0688">Ribosomal frameshifting</keyword>
<name>PA_INCJH</name>
<comment type="function">
    <text evidence="1">Plays an essential role in viral RNA transcription and replication by forming the heterotrimeric polymerase complex together with PB1 and PB2 subunits. The complex transcribes viral mRNAs by using a unique mechanism called cap-snatching. It consists in the hijacking and cleavage of host capped pre-mRNAs. These short capped RNAs are then used as primers for viral mRNAs. The PB2 subunit is responsible for the binding of the 5' cap of cellular pre-mRNAs which are subsequently cleaved after 10-13 nucleotides by the PA subunit that carries the endonuclease activity.</text>
</comment>
<comment type="cofactor">
    <cofactor evidence="1">
        <name>Mn(2+)</name>
        <dbReference type="ChEBI" id="CHEBI:29035"/>
    </cofactor>
    <text evidence="1">Binds 2 manganese ions per subunit.</text>
</comment>
<comment type="subunit">
    <text evidence="1">Influenza RNA polymerase is composed of three subunits: PB1, PB2 and PA. Interacts (via C-terminus) with PB1 (via N-terminus).</text>
</comment>
<comment type="subcellular location">
    <subcellularLocation>
        <location evidence="1">Host cytoplasm</location>
    </subcellularLocation>
    <subcellularLocation>
        <location evidence="1">Host nucleus</location>
    </subcellularLocation>
    <text evidence="1">PB1 and PA are transported in the host nucleus as a complex.</text>
</comment>
<comment type="alternative products">
    <event type="ribosomal frameshifting"/>
    <isoform>
        <id>Q9IMP5-1</id>
        <name>PA</name>
        <sequence type="displayed"/>
    </isoform>
    <isoform>
        <id>Q9IMP5-2</id>
        <name>PA-X</name>
        <sequence type="not described"/>
    </isoform>
</comment>
<comment type="PTM">
    <text evidence="1">Phosphorylated on serines and threonines by host kinases, including human casein kinase II.</text>
</comment>
<comment type="similarity">
    <text evidence="1">Belongs to the influenza viruses PA family.</text>
</comment>
<proteinExistence type="evidence at protein level"/>